<reference key="1">
    <citation type="journal article" date="2000" name="J. Bacteriol.">
        <title>A homologue of an operon required for DNA transfer in Agrobacterium is required in Brucella abortus for virulence and intracellular multiplication.</title>
        <authorList>
            <person name="Sieira R."/>
            <person name="Comerci D.J."/>
            <person name="Sanchez D.O."/>
            <person name="Ugalde R.A."/>
        </authorList>
    </citation>
    <scope>NUCLEOTIDE SEQUENCE [GENOMIC DNA]</scope>
    <scope>TRANSCRIPTION</scope>
    <scope>FUNCTION</scope>
</reference>
<reference key="2">
    <citation type="journal article" date="2005" name="Infect. Immun.">
        <title>Whole-genome analyses of speciation events in pathogenic Brucellae.</title>
        <authorList>
            <person name="Chain P.S."/>
            <person name="Comerci D.J."/>
            <person name="Tolmasky M.E."/>
            <person name="Larimer F.W."/>
            <person name="Malfatti S.A."/>
            <person name="Vergez L.M."/>
            <person name="Aguero F."/>
            <person name="Land M.L."/>
            <person name="Ugalde R.A."/>
            <person name="Garcia E."/>
        </authorList>
    </citation>
    <scope>NUCLEOTIDE SEQUENCE [LARGE SCALE GENOMIC DNA]</scope>
    <source>
        <strain>2308</strain>
    </source>
</reference>
<name>VIRB9_BRUA2</name>
<comment type="function">
    <text evidence="2">The virB operon is essential for intracellular survival and is not involved in the invasion process. Constitutes a major determinant of virulence in mice.</text>
</comment>
<comment type="miscellaneous">
    <text>Transcription is turned on at the beginning of the stationary phase of vegetative growth.</text>
</comment>
<comment type="similarity">
    <text evidence="3">Belongs to the TrbG/VirB9 family.</text>
</comment>
<organism>
    <name type="scientific">Brucella abortus (strain 2308)</name>
    <dbReference type="NCBI Taxonomy" id="359391"/>
    <lineage>
        <taxon>Bacteria</taxon>
        <taxon>Pseudomonadati</taxon>
        <taxon>Pseudomonadota</taxon>
        <taxon>Alphaproteobacteria</taxon>
        <taxon>Hyphomicrobiales</taxon>
        <taxon>Brucellaceae</taxon>
        <taxon>Brucella/Ochrobactrum group</taxon>
        <taxon>Brucella</taxon>
    </lineage>
</organism>
<feature type="signal peptide" evidence="1">
    <location>
        <begin position="1"/>
        <end position="19"/>
    </location>
</feature>
<feature type="chain" id="PRO_0000291432" description="Type IV secretion system protein virB9">
    <location>
        <begin position="20"/>
        <end position="289"/>
    </location>
</feature>
<protein>
    <recommendedName>
        <fullName>Type IV secretion system protein virB9</fullName>
    </recommendedName>
</protein>
<dbReference type="EMBL" id="AF226278">
    <property type="protein sequence ID" value="AAF73902.1"/>
    <property type="molecule type" value="Genomic_DNA"/>
</dbReference>
<dbReference type="EMBL" id="AM040265">
    <property type="protein sequence ID" value="CAJ12226.1"/>
    <property type="molecule type" value="Genomic_DNA"/>
</dbReference>
<dbReference type="RefSeq" id="WP_002966518.1">
    <property type="nucleotide sequence ID" value="NZ_KN046823.1"/>
</dbReference>
<dbReference type="SMR" id="Q2YJ79"/>
<dbReference type="STRING" id="359391.BAB2_0060"/>
<dbReference type="GeneID" id="93015962"/>
<dbReference type="KEGG" id="bmf:BAB2_0060"/>
<dbReference type="PATRIC" id="fig|359391.11.peg.2008"/>
<dbReference type="HOGENOM" id="CLU_058585_3_0_5"/>
<dbReference type="PhylomeDB" id="Q2YJ79"/>
<dbReference type="BioCyc" id="MetaCyc:BAB_RS26645-MONOMER"/>
<dbReference type="Proteomes" id="UP000002719">
    <property type="component" value="Chromosome II"/>
</dbReference>
<dbReference type="CDD" id="cd06911">
    <property type="entry name" value="VirB9_CagX_TrbG"/>
    <property type="match status" value="1"/>
</dbReference>
<dbReference type="Gene3D" id="2.60.40.2500">
    <property type="match status" value="1"/>
</dbReference>
<dbReference type="InterPro" id="IPR010258">
    <property type="entry name" value="Conjugal_tfr_TrbG/VirB9/CagX"/>
</dbReference>
<dbReference type="InterPro" id="IPR014148">
    <property type="entry name" value="VirB9"/>
</dbReference>
<dbReference type="InterPro" id="IPR033645">
    <property type="entry name" value="VirB9/CagX/TrbG_C"/>
</dbReference>
<dbReference type="InterPro" id="IPR038161">
    <property type="entry name" value="VirB9/CagX/TrbG_C_sf"/>
</dbReference>
<dbReference type="NCBIfam" id="TIGR02781">
    <property type="entry name" value="VirB9"/>
    <property type="match status" value="1"/>
</dbReference>
<dbReference type="Pfam" id="PF03524">
    <property type="entry name" value="CagX"/>
    <property type="match status" value="1"/>
</dbReference>
<keyword id="KW-1185">Reference proteome</keyword>
<keyword id="KW-0732">Signal</keyword>
<keyword id="KW-0843">Virulence</keyword>
<accession>Q2YJ79</accession>
<accession>Q57A22</accession>
<accession>Q7BMZ5</accession>
<sequence>MKRFLLACILITLASPSWATKIPSGSKYDSRIQYVDYNSGDVVLVRALPGVGARIVFAPGENIEDVASGFTQGWEFKASHNILYLKARSMTLSHSNQSIDMAPEPGKWDTNLMVTTDQRMYDFDLRLMPGRNNQRVAYRVQFRYPAAAAAAAVAAAQKRVVQARMNARPSPVNWNYTMQVGTNSASIAPTLAYDDGRFTYLRFPNNRDFPAAFLVAEDKSESIVNSHIDPSAPDILVLHRVAKQMVLRLGNKVIGIYNESFNPDGVPARDGTTVPGVKRVIKSPGENLQ</sequence>
<proteinExistence type="inferred from homology"/>
<evidence type="ECO:0000255" key="1"/>
<evidence type="ECO:0000269" key="2">
    <source>
    </source>
</evidence>
<evidence type="ECO:0000305" key="3"/>
<gene>
    <name type="primary">virB9</name>
    <name type="ordered locus">BAB2_0060</name>
</gene>